<gene>
    <name evidence="33" type="primary">HEXB</name>
    <name type="ORF">HCC7</name>
</gene>
<evidence type="ECO:0000250" key="1">
    <source>
        <dbReference type="UniProtKB" id="P06865"/>
    </source>
</evidence>
<evidence type="ECO:0000250" key="2">
    <source>
        <dbReference type="UniProtKB" id="P20060"/>
    </source>
</evidence>
<evidence type="ECO:0000255" key="3"/>
<evidence type="ECO:0000269" key="4">
    <source>
    </source>
</evidence>
<evidence type="ECO:0000269" key="5">
    <source>
    </source>
</evidence>
<evidence type="ECO:0000269" key="6">
    <source>
    </source>
</evidence>
<evidence type="ECO:0000269" key="7">
    <source>
    </source>
</evidence>
<evidence type="ECO:0000269" key="8">
    <source>
    </source>
</evidence>
<evidence type="ECO:0000269" key="9">
    <source>
    </source>
</evidence>
<evidence type="ECO:0000269" key="10">
    <source>
    </source>
</evidence>
<evidence type="ECO:0000269" key="11">
    <source>
    </source>
</evidence>
<evidence type="ECO:0000269" key="12">
    <source>
    </source>
</evidence>
<evidence type="ECO:0000269" key="13">
    <source>
    </source>
</evidence>
<evidence type="ECO:0000269" key="14">
    <source>
    </source>
</evidence>
<evidence type="ECO:0000269" key="15">
    <source>
    </source>
</evidence>
<evidence type="ECO:0000269" key="16">
    <source>
    </source>
</evidence>
<evidence type="ECO:0000269" key="17">
    <source>
    </source>
</evidence>
<evidence type="ECO:0000269" key="18">
    <source>
    </source>
</evidence>
<evidence type="ECO:0000269" key="19">
    <source>
    </source>
</evidence>
<evidence type="ECO:0000269" key="20">
    <source>
    </source>
</evidence>
<evidence type="ECO:0000269" key="21">
    <source>
    </source>
</evidence>
<evidence type="ECO:0000269" key="22">
    <source>
    </source>
</evidence>
<evidence type="ECO:0000269" key="23">
    <source>
    </source>
</evidence>
<evidence type="ECO:0000269" key="24">
    <source>
    </source>
</evidence>
<evidence type="ECO:0000269" key="25">
    <source>
    </source>
</evidence>
<evidence type="ECO:0000269" key="26">
    <source>
    </source>
</evidence>
<evidence type="ECO:0000269" key="27">
    <source>
    </source>
</evidence>
<evidence type="ECO:0000269" key="28">
    <source ref="4"/>
</evidence>
<evidence type="ECO:0000269" key="29">
    <source ref="5"/>
</evidence>
<evidence type="ECO:0000305" key="30"/>
<evidence type="ECO:0000305" key="31">
    <source>
    </source>
</evidence>
<evidence type="ECO:0000305" key="32">
    <source>
    </source>
</evidence>
<evidence type="ECO:0000312" key="33">
    <source>
        <dbReference type="HGNC" id="HGNC:4879"/>
    </source>
</evidence>
<evidence type="ECO:0007829" key="34">
    <source>
        <dbReference type="PDB" id="1NOW"/>
    </source>
</evidence>
<evidence type="ECO:0007829" key="35">
    <source>
        <dbReference type="PDB" id="1O7A"/>
    </source>
</evidence>
<evidence type="ECO:0007829" key="36">
    <source>
        <dbReference type="PDB" id="2GJX"/>
    </source>
</evidence>
<evidence type="ECO:0007829" key="37">
    <source>
        <dbReference type="PDB" id="2GK1"/>
    </source>
</evidence>
<evidence type="ECO:0007829" key="38">
    <source>
        <dbReference type="PDB" id="3LMY"/>
    </source>
</evidence>
<name>HEXB_HUMAN</name>
<protein>
    <recommendedName>
        <fullName evidence="30">Beta-hexosaminidase subunit beta</fullName>
        <ecNumber evidence="4 6 21 23 26">3.2.1.52</ecNumber>
    </recommendedName>
    <alternativeName>
        <fullName>Beta-N-acetylhexosaminidase subunit beta</fullName>
        <shortName>Hexosaminidase subunit B</shortName>
    </alternativeName>
    <alternativeName>
        <fullName>Cervical cancer proto-oncogene 7 protein</fullName>
        <shortName>HCC-7</shortName>
    </alternativeName>
    <alternativeName>
        <fullName>N-acetyl-beta-glucosaminidase subunit beta</fullName>
    </alternativeName>
    <component>
        <recommendedName>
            <fullName>Beta-hexosaminidase subunit beta chain B</fullName>
        </recommendedName>
    </component>
    <component>
        <recommendedName>
            <fullName>Beta-hexosaminidase subunit beta chain A</fullName>
        </recommendedName>
    </component>
</protein>
<comment type="function">
    <text evidence="2 6 21 23 26">Hydrolyzes the non-reducing end N-acetyl-D-hexosamine and/or sulfated N-acetyl-D-hexosamine of glycoconjugates, such as the oligosaccharide moieties from proteins and neutral glycolipids, or from certain mucopolysaccharides (PubMed:11707436, PubMed:8123671, PubMed:8672428, PubMed:9694901). The isozyme B does not hydrolyze each of these substrates, however hydrolyzes efficiently neutral oligosaccharide (PubMed:11707436). Only the isozyme A is responsible for the degradation of GM2 gangliosides in the presence of GM2A (PubMed:8123671, PubMed:8672428, PubMed:9694901). During fertilization is responsible, at least in part, for the zona block to polyspermy. Present in the cortical granules of non-activated oocytes, is exocytosed during the cortical reaction in response to oocyte activation and inactivates the sperm galactosyltransferase-binding site, accounting for the block in sperm binding to the zona pellucida (By similarity).</text>
</comment>
<comment type="catalytic activity">
    <reaction evidence="4 6 21 23 26">
        <text>Hydrolysis of terminal non-reducing N-acetyl-D-hexosamine residues in N-acetyl-beta-D-hexosaminides.</text>
        <dbReference type="EC" id="3.2.1.52"/>
    </reaction>
</comment>
<comment type="catalytic activity">
    <reaction evidence="6">
        <text>N-acetyl-beta-D-galactosaminyl-(1-&gt;4)-beta-D-3-sulfogalactosyl-(1-&gt;4)-beta-D-glucosyl-(1&lt;-&gt;1')-ceramide + H2O = a beta-D-3-sulfogalactosyl-(1-&gt;4)-beta-D-glucosyl-(1&lt;-&gt;1')-ceramide + N-acetyl-beta-D-galactosamine</text>
        <dbReference type="Rhea" id="RHEA:48276"/>
        <dbReference type="ChEBI" id="CHEBI:15377"/>
        <dbReference type="ChEBI" id="CHEBI:28497"/>
        <dbReference type="ChEBI" id="CHEBI:90163"/>
        <dbReference type="ChEBI" id="CHEBI:90164"/>
    </reaction>
    <physiologicalReaction direction="left-to-right" evidence="31">
        <dbReference type="Rhea" id="RHEA:48277"/>
    </physiologicalReaction>
</comment>
<comment type="catalytic activity">
    <reaction evidence="21 23 26">
        <text>a ganglioside GM2 (d18:1(4E)) + H2O = a ganglioside GM3 (d18:1(4E)) + N-acetyl-beta-D-galactosamine</text>
        <dbReference type="Rhea" id="RHEA:47940"/>
        <dbReference type="ChEBI" id="CHEBI:15377"/>
        <dbReference type="ChEBI" id="CHEBI:28497"/>
        <dbReference type="ChEBI" id="CHEBI:60065"/>
        <dbReference type="ChEBI" id="CHEBI:71502"/>
    </reaction>
    <physiologicalReaction direction="left-to-right" evidence="32">
        <dbReference type="Rhea" id="RHEA:47941"/>
    </physiologicalReaction>
</comment>
<comment type="catalytic activity">
    <reaction evidence="21 23 26">
        <text>a ganglioside GM2 + H2O = a ganglioside GM3 + N-acetyl-beta-D-galactosamine</text>
        <dbReference type="Rhea" id="RHEA:47968"/>
        <dbReference type="ChEBI" id="CHEBI:15377"/>
        <dbReference type="ChEBI" id="CHEBI:28497"/>
        <dbReference type="ChEBI" id="CHEBI:79210"/>
        <dbReference type="ChEBI" id="CHEBI:79218"/>
    </reaction>
    <physiologicalReaction direction="left-to-right" evidence="32">
        <dbReference type="Rhea" id="RHEA:47969"/>
    </physiologicalReaction>
</comment>
<comment type="catalytic activity">
    <reaction evidence="6">
        <text>beta-D-GalNAc-(1-&gt;4)-alpha-L-IdoA-(1-&gt;3)-beta-D-GalNAc-4-sulfate-(1-&gt;4)-alpha-L-IdoA-(1-&gt;3)-D-GalNAc-4-sulfate + H2O = alpha-L-IdoA-(1-&gt;3)-beta-D-GalNAc-4-sulfate-(1-&gt;4)-alpha-L-IdoA-(1-&gt;3)-D-GalNAc-4-sulfate + N-acetyl-D-galactosamine</text>
        <dbReference type="Rhea" id="RHEA:64372"/>
        <dbReference type="ChEBI" id="CHEBI:15377"/>
        <dbReference type="ChEBI" id="CHEBI:28037"/>
        <dbReference type="ChEBI" id="CHEBI:152565"/>
        <dbReference type="ChEBI" id="CHEBI:152566"/>
    </reaction>
    <physiologicalReaction direction="left-to-right" evidence="31">
        <dbReference type="Rhea" id="RHEA:64373"/>
    </physiologicalReaction>
</comment>
<comment type="catalytic activity">
    <reaction evidence="6">
        <text>N-acetyl-beta-D-6-sulfogalactosaminyl-(1-&gt;4)-alpha-L-iduronyl-(1-&gt;3)-N-acetyl-D-6-sulfogalactosamine + H2O = alpha-L-iduronyl-(1-&gt;3)-N-acetyl-D-6-sulfogalactosamine + N-acetyl-D-6-sulfogalactosamine</text>
        <dbReference type="Rhea" id="RHEA:64384"/>
        <dbReference type="ChEBI" id="CHEBI:15377"/>
        <dbReference type="ChEBI" id="CHEBI:152567"/>
        <dbReference type="ChEBI" id="CHEBI:152568"/>
        <dbReference type="ChEBI" id="CHEBI:153064"/>
    </reaction>
    <physiologicalReaction direction="left-to-right" evidence="31">
        <dbReference type="Rhea" id="RHEA:64385"/>
    </physiologicalReaction>
</comment>
<comment type="activity regulation">
    <text evidence="6">Addition of GM2A stimulates the hydrolysis of sulfated glycosphingolipid SM2 and the ganglioside GM2.</text>
</comment>
<comment type="biophysicochemical properties">
    <phDependence>
        <text evidence="4">Optimum pH is 4.</text>
    </phDependence>
</comment>
<comment type="subunit">
    <text evidence="1 23">There are 3 forms of beta-hexosaminidase: hexosaminidase A is a heterodimer composed of one subunit alpha and one subunit beta (chain A and B); hexosaminidase B is a homodimer of two beta subunits (two chains A and B); hexosaminidase S is a homodimer of two alpha subunits (By similarity). The composition of the dimer (isozyme A versus isozyme S) has a significant effect on the substrate specificity of the alpha subunit active site (PubMed:8672428).</text>
</comment>
<comment type="interaction">
    <interactant intactId="EBI-7133736">
        <id>P07686</id>
    </interactant>
    <interactant intactId="EBI-14199987">
        <id>Q9Y575-3</id>
        <label>ASB3</label>
    </interactant>
    <organismsDiffer>false</organismsDiffer>
    <experiments>3</experiments>
</comment>
<comment type="interaction">
    <interactant intactId="EBI-7133736">
        <id>P07686</id>
    </interactant>
    <interactant intactId="EBI-6149008">
        <id>O75808</id>
        <label>CAPN15</label>
    </interactant>
    <organismsDiffer>false</organismsDiffer>
    <experiments>3</experiments>
</comment>
<comment type="interaction">
    <interactant intactId="EBI-7133736">
        <id>P07686</id>
    </interactant>
    <interactant intactId="EBI-350590">
        <id>Q9UNS2</id>
        <label>COPS3</label>
    </interactant>
    <organismsDiffer>false</organismsDiffer>
    <experiments>3</experiments>
</comment>
<comment type="interaction">
    <interactant intactId="EBI-7133736">
        <id>P07686</id>
    </interactant>
    <interactant intactId="EBI-18938272">
        <id>Q96KR6</id>
        <label>FAM210B</label>
    </interactant>
    <organismsDiffer>false</organismsDiffer>
    <experiments>3</experiments>
</comment>
<comment type="interaction">
    <interactant intactId="EBI-7133736">
        <id>P07686</id>
    </interactant>
    <interactant intactId="EBI-723519">
        <id>P06865</id>
        <label>HEXA</label>
    </interactant>
    <organismsDiffer>false</organismsDiffer>
    <experiments>5</experiments>
</comment>
<comment type="interaction">
    <interactant intactId="EBI-7133736">
        <id>P07686</id>
    </interactant>
    <interactant intactId="EBI-740785">
        <id>P49639</id>
        <label>HOXA1</label>
    </interactant>
    <organismsDiffer>false</organismsDiffer>
    <experiments>3</experiments>
</comment>
<comment type="interaction">
    <interactant intactId="EBI-7133736">
        <id>P07686</id>
    </interactant>
    <interactant intactId="EBI-6426427">
        <id>Q8N4N3</id>
        <label>KLHL36</label>
    </interactant>
    <organismsDiffer>false</organismsDiffer>
    <experiments>3</experiments>
</comment>
<comment type="interaction">
    <interactant intactId="EBI-7133736">
        <id>P07686</id>
    </interactant>
    <interactant intactId="EBI-739832">
        <id>Q8TBB1</id>
        <label>LNX1</label>
    </interactant>
    <organismsDiffer>false</organismsDiffer>
    <experiments>3</experiments>
</comment>
<comment type="interaction">
    <interactant intactId="EBI-7133736">
        <id>P07686</id>
    </interactant>
    <interactant intactId="EBI-2340269">
        <id>Q13064</id>
        <label>MKRN3</label>
    </interactant>
    <organismsDiffer>false</organismsDiffer>
    <experiments>3</experiments>
</comment>
<comment type="interaction">
    <interactant intactId="EBI-7133736">
        <id>P07686</id>
    </interactant>
    <interactant intactId="EBI-718631">
        <id>Q13564</id>
        <label>NAE1</label>
    </interactant>
    <organismsDiffer>false</organismsDiffer>
    <experiments>3</experiments>
</comment>
<comment type="interaction">
    <interactant intactId="EBI-7133736">
        <id>P07686</id>
    </interactant>
    <interactant intactId="EBI-1059321">
        <id>Q8NFH3</id>
        <label>NUP43</label>
    </interactant>
    <organismsDiffer>false</organismsDiffer>
    <experiments>3</experiments>
</comment>
<comment type="interaction">
    <interactant intactId="EBI-7133736">
        <id>P07686</id>
    </interactant>
    <interactant intactId="EBI-444173">
        <id>Q9GZY0</id>
        <label>NXF2</label>
    </interactant>
    <organismsDiffer>false</organismsDiffer>
    <experiments>3</experiments>
</comment>
<comment type="interaction">
    <interactant intactId="EBI-7133736">
        <id>P07686</id>
    </interactant>
    <interactant intactId="EBI-1058491">
        <id>Q96FW1</id>
        <label>OTUB1</label>
    </interactant>
    <organismsDiffer>false</organismsDiffer>
    <experiments>3</experiments>
</comment>
<comment type="interaction">
    <interactant intactId="EBI-7133736">
        <id>P07686</id>
    </interactant>
    <interactant intactId="EBI-629434">
        <id>O75925</id>
        <label>PIAS1</label>
    </interactant>
    <organismsDiffer>false</organismsDiffer>
    <experiments>3</experiments>
</comment>
<comment type="interaction">
    <interactant intactId="EBI-7133736">
        <id>P07686</id>
    </interactant>
    <interactant intactId="EBI-21252376">
        <id>Q96PM5-4</id>
        <label>RCHY1</label>
    </interactant>
    <organismsDiffer>false</organismsDiffer>
    <experiments>3</experiments>
</comment>
<comment type="interaction">
    <interactant intactId="EBI-7133736">
        <id>P07686</id>
    </interactant>
    <interactant intactId="EBI-743938">
        <id>Q96D59</id>
        <label>RNF183</label>
    </interactant>
    <organismsDiffer>false</organismsDiffer>
    <experiments>3</experiments>
</comment>
<comment type="interaction">
    <interactant intactId="EBI-7133736">
        <id>P07686</id>
    </interactant>
    <interactant intactId="EBI-743971">
        <id>Q6NW29</id>
        <label>RWDD4</label>
    </interactant>
    <organismsDiffer>false</organismsDiffer>
    <experiments>3</experiments>
</comment>
<comment type="interaction">
    <interactant intactId="EBI-7133736">
        <id>P07686</id>
    </interactant>
    <interactant intactId="EBI-711424">
        <id>Q04724</id>
        <label>TLE1</label>
    </interactant>
    <organismsDiffer>false</organismsDiffer>
    <experiments>3</experiments>
</comment>
<comment type="interaction">
    <interactant intactId="EBI-7133736">
        <id>P07686</id>
    </interactant>
    <interactant intactId="EBI-8638294">
        <id>Q9NUH8</id>
        <label>TMEM14B</label>
    </interactant>
    <organismsDiffer>false</organismsDiffer>
    <experiments>3</experiments>
</comment>
<comment type="interaction">
    <interactant intactId="EBI-7133736">
        <id>P07686</id>
    </interactant>
    <interactant intactId="EBI-10180829">
        <id>Q7KZS0</id>
        <label>UBE2I</label>
    </interactant>
    <organismsDiffer>false</organismsDiffer>
    <experiments>3</experiments>
</comment>
<comment type="interaction">
    <interactant intactId="EBI-7133736">
        <id>P07686</id>
    </interactant>
    <interactant intactId="EBI-12876508">
        <id>O95164</id>
        <label>UBL3</label>
    </interactant>
    <organismsDiffer>false</organismsDiffer>
    <experiments>3</experiments>
</comment>
<comment type="interaction">
    <interactant intactId="EBI-7133736">
        <id>P07686</id>
    </interactant>
    <interactant intactId="EBI-947187">
        <id>Q9UHD9</id>
        <label>UBQLN2</label>
    </interactant>
    <organismsDiffer>false</organismsDiffer>
    <experiments>3</experiments>
</comment>
<comment type="interaction">
    <interactant intactId="EBI-7133736">
        <id>P07686</id>
    </interactant>
    <interactant intactId="EBI-25832660">
        <id>Q9H347</id>
        <label>UBQLN3</label>
    </interactant>
    <organismsDiffer>false</organismsDiffer>
    <experiments>3</experiments>
</comment>
<comment type="interaction">
    <interactant intactId="EBI-7133736">
        <id>P07686</id>
    </interactant>
    <interactant intactId="EBI-12295223">
        <id>Q8IYU4</id>
        <label>UBQLNL</label>
    </interactant>
    <organismsDiffer>false</organismsDiffer>
    <experiments>3</experiments>
</comment>
<comment type="interaction">
    <interactant intactId="EBI-7133736">
        <id>P07686</id>
    </interactant>
    <interactant intactId="EBI-711736">
        <id>Q8IWV7</id>
        <label>UBR1</label>
    </interactant>
    <organismsDiffer>false</organismsDiffer>
    <experiments>3</experiments>
</comment>
<comment type="interaction">
    <interactant intactId="EBI-7133736">
        <id>P07686</id>
    </interactant>
    <interactant intactId="EBI-743923">
        <id>O00308</id>
        <label>WWP2</label>
    </interactant>
    <organismsDiffer>false</organismsDiffer>
    <experiments>3</experiments>
</comment>
<comment type="interaction">
    <interactant intactId="EBI-7133736">
        <id>P07686</id>
    </interactant>
    <interactant intactId="EBI-517127">
        <id>P98170</id>
        <label>XIAP</label>
    </interactant>
    <organismsDiffer>false</organismsDiffer>
    <experiments>3</experiments>
</comment>
<comment type="interaction">
    <interactant intactId="EBI-7133736">
        <id>P07686</id>
    </interactant>
    <interactant intactId="EBI-711925">
        <id>Q05516</id>
        <label>ZBTB16</label>
    </interactant>
    <organismsDiffer>false</organismsDiffer>
    <experiments>3</experiments>
</comment>
<comment type="subcellular location">
    <subcellularLocation>
        <location evidence="26">Lysosome</location>
    </subcellularLocation>
    <subcellularLocation>
        <location evidence="2">Cytoplasmic vesicle</location>
        <location evidence="2">Secretory vesicle</location>
        <location evidence="2">Cortical granule</location>
    </subcellularLocation>
</comment>
<comment type="PTM">
    <text evidence="5 7 11">N-linked glycans at Asn-142 and Asn-190 consist of Man(3)-GlcNAc(2) and Man(5 to 7)-GlcNAc(2), respectively.</text>
</comment>
<comment type="PTM">
    <text>The beta-A and beta-B chains are produced by proteolytic processing of the precursor beta chain.</text>
</comment>
<comment type="disease" evidence="8 10 18 19 20 22 24 25 26 27">
    <disease id="DI-00537">
        <name>GM2-gangliosidosis 2</name>
        <acronym>GM2G2</acronym>
        <description>An autosomal recessive lysosomal storage disease marked by the accumulation of GM2 gangliosides in the neuronal cells. Clinically indistinguishable from GM2-gangliosidosis type 1, presenting startle reactions, early blindness, progressive motor and mental deterioration, macrocephaly and cherry-red spots on the macula.</description>
        <dbReference type="MIM" id="268800"/>
    </disease>
    <text>The disease is caused by variants affecting the gene represented in this entry.</text>
</comment>
<comment type="similarity">
    <text evidence="30">Belongs to the glycosyl hydrolase 20 family.</text>
</comment>
<comment type="sequence caution" evidence="30">
    <conflict type="frameshift">
        <sequence resource="EMBL-CDS" id="AAA51828"/>
    </conflict>
</comment>
<sequence>MELCGLGLPRPPMLLALLLATLLAAMLALLTQVALVVQVAEAARAPSVSAKPGPALWPLPLLVKMTPNLLHLAPENFYISHSPNSTAGPSCTLLEEAFRRYHGYIFGFYKWHHEPAEFQAKTQVQQLLVSITLQSECDAFPNISSDESYTLLVKEPVAVLKANRVWGALRGLETFSQLVYQDSYGTFTINESTIIDSPRFSHRGILIDTSRHYLPVKIILKTLDAMAFNKFNVLHWHIVDDQSFPYQSITFPELSNKGSYSLSHVYTPNDVRMVIEYARLRGIRVLPEFDTPGHTLSWGKGQKDLLTPCYSRQNKLDSFGPINPTLNTTYSFLTTFFKEISEVFPDQFIHLGGDEVEFKCWESNPKIQDFMRQKGFGTDFKKLESFYIQKVLDIIATINKGSIVWQEVFDDKAKLAPGTIVEVWKDSAYPEELSRVTASGFPVILSAPWYLDLISYGQDWRKYYKVEPLDFGGTQKQKQLFIGGEACLWGEYVDATNLTPRLWPRASAVGERLWSSKDVRDMDDAYDRLTRHRCRMVERGIAAQPLYAGYCNHENM</sequence>
<feature type="signal peptide" evidence="3">
    <location>
        <begin position="1"/>
        <end position="42"/>
    </location>
</feature>
<feature type="propeptide" id="PRO_0000012002" evidence="13 14">
    <location>
        <begin position="43"/>
        <end position="121"/>
    </location>
</feature>
<feature type="chain" id="PRO_0000012003" description="Beta-hexosaminidase subunit beta">
    <location>
        <begin position="122"/>
        <end position="556"/>
    </location>
</feature>
<feature type="chain" id="PRO_0000012004" description="Beta-hexosaminidase subunit beta chain B">
    <location>
        <begin position="122"/>
        <end position="311"/>
    </location>
</feature>
<feature type="chain" id="PRO_0000012005" description="Beta-hexosaminidase subunit beta chain A">
    <location>
        <begin position="315"/>
        <end position="556"/>
    </location>
</feature>
<feature type="active site" description="Proton donor" evidence="4">
    <location>
        <position position="355"/>
    </location>
</feature>
<feature type="site" description="Not glycosylated" evidence="5">
    <location>
        <position position="497"/>
    </location>
</feature>
<feature type="glycosylation site" description="N-linked (GlcNAc...) asparagine" evidence="5 11">
    <location>
        <position position="84"/>
    </location>
</feature>
<feature type="glycosylation site" description="N-linked (GlcNAc...) asparagine" evidence="5">
    <location>
        <position position="142"/>
    </location>
</feature>
<feature type="glycosylation site" description="N-linked (GlcNAc...) asparagine" evidence="5">
    <location>
        <position position="190"/>
    </location>
</feature>
<feature type="glycosylation site" description="N-linked (GlcNAc...) asparagine" evidence="5 7 11">
    <location>
        <position position="327"/>
    </location>
</feature>
<feature type="disulfide bond">
    <location>
        <begin position="91"/>
        <end position="137"/>
    </location>
</feature>
<feature type="disulfide bond">
    <location>
        <begin position="309"/>
        <end position="360"/>
    </location>
</feature>
<feature type="disulfide bond">
    <location>
        <begin position="534"/>
        <end position="551"/>
    </location>
</feature>
<feature type="sequence variant" id="VAR_003247" description="In dbSNP:rs820878." evidence="9 12 15 16 17 20 28 29">
    <original>L</original>
    <variation>S</variation>
    <location>
        <position position="62"/>
    </location>
</feature>
<feature type="sequence variant" id="VAR_003248" description="In dbSNP:rs11556045.">
    <original>K</original>
    <variation>R</variation>
    <location>
        <position position="121"/>
    </location>
</feature>
<feature type="sequence variant" id="VAR_003249" description="In dbSNP:rs10805890." evidence="10 24">
    <original>I</original>
    <variation>V</variation>
    <location>
        <position position="207"/>
    </location>
</feature>
<feature type="sequence variant" id="VAR_011704" description="In GM2G2; dbSNP:rs1554035829." evidence="27">
    <original>S</original>
    <variation>R</variation>
    <location>
        <position position="255"/>
    </location>
</feature>
<feature type="sequence variant" id="VAR_003250" description="In GM2G2; adult type; severe; dbSNP:rs1554036641." evidence="18">
    <original>C</original>
    <variation>Y</variation>
    <location>
        <position position="309"/>
    </location>
</feature>
<feature type="sequence variant" id="VAR_003251" description="In GM2G2; dbSNP:rs28942073." evidence="8 18">
    <original>P</original>
    <variation>L</variation>
    <location>
        <position position="417"/>
    </location>
</feature>
<feature type="sequence variant" id="VAR_003252" description="In GM2G2; dbSNP:rs121907982." evidence="10">
    <original>Y</original>
    <variation>S</variation>
    <location>
        <position position="456"/>
    </location>
</feature>
<feature type="sequence variant" id="VAR_011705" description="In GM2G2; decreases the isozyme A transport out of the endoplasmic reticulum. Lowers its heat stability. Affects the ability of isozyme A to hydrolyze GM2 ganglioside; dbSNP:rs121907985." evidence="26">
    <original>P</original>
    <variation>S</variation>
    <location>
        <position position="504"/>
    </location>
</feature>
<feature type="sequence variant" id="VAR_003253" description="In GM2G2; dbSNP:rs121907983." evidence="22 24">
    <original>R</original>
    <variation>Q</variation>
    <location>
        <position position="505"/>
    </location>
</feature>
<feature type="sequence variant" id="VAR_003254" description="In GM2G2; infantile type; dbSNP:rs727503960." evidence="19">
    <original>C</original>
    <variation>Y</variation>
    <location>
        <position position="534"/>
    </location>
</feature>
<feature type="sequence variant" id="VAR_011706" description="In GM2G2; dbSNP:rs121907984." evidence="25">
    <original>A</original>
    <variation>T</variation>
    <location>
        <position position="543"/>
    </location>
</feature>
<feature type="mutagenesis site" description="Does not affect the native conformation of the isozyme A. Does not affect hydrolysis of GM2 ganglioside by the isozyme A." evidence="23">
    <original>R</original>
    <variation>K</variation>
    <location>
        <position position="211"/>
    </location>
</feature>
<feature type="mutagenesis site" description="2.7-fold reduction in substrate affinity. 39-fold reduction in catalytic efficiency." evidence="4">
    <original>D</original>
    <variation>N</variation>
    <location>
        <position position="241"/>
    </location>
</feature>
<feature type="mutagenesis site" description="No effect on substrate affinity. 1750-fold reduction in catalytic efficiency." evidence="4">
    <original>D</original>
    <variation>N</variation>
    <location>
        <position position="354"/>
    </location>
</feature>
<feature type="mutagenesis site" description="1.5-fold increase in substrate affinity. 2300-fold reduction in catalytic efficiency. Reduces optimal pH to 3-3.5." evidence="4">
    <original>E</original>
    <variation>Q</variation>
    <location>
        <position position="355"/>
    </location>
</feature>
<feature type="mutagenesis site" description="No effect on substrate affinity and on catalytic efficiency." evidence="4">
    <original>E</original>
    <variation>Q</variation>
    <location>
        <position position="491"/>
    </location>
</feature>
<feature type="strand" evidence="34">
    <location>
        <begin position="61"/>
        <end position="71"/>
    </location>
</feature>
<feature type="helix" evidence="34">
    <location>
        <begin position="74"/>
        <end position="76"/>
    </location>
</feature>
<feature type="strand" evidence="34">
    <location>
        <begin position="78"/>
        <end position="81"/>
    </location>
</feature>
<feature type="strand" evidence="35">
    <location>
        <begin position="83"/>
        <end position="86"/>
    </location>
</feature>
<feature type="helix" evidence="34">
    <location>
        <begin position="92"/>
        <end position="105"/>
    </location>
</feature>
<feature type="strand" evidence="34">
    <location>
        <begin position="126"/>
        <end position="131"/>
    </location>
</feature>
<feature type="strand" evidence="34">
    <location>
        <begin position="149"/>
        <end position="153"/>
    </location>
</feature>
<feature type="strand" evidence="34">
    <location>
        <begin position="155"/>
        <end position="164"/>
    </location>
</feature>
<feature type="helix" evidence="34">
    <location>
        <begin position="165"/>
        <end position="178"/>
    </location>
</feature>
<feature type="strand" evidence="34">
    <location>
        <begin position="187"/>
        <end position="196"/>
    </location>
</feature>
<feature type="strand" evidence="34">
    <location>
        <begin position="201"/>
        <end position="212"/>
    </location>
</feature>
<feature type="helix" evidence="34">
    <location>
        <begin position="216"/>
        <end position="228"/>
    </location>
</feature>
<feature type="strand" evidence="34">
    <location>
        <begin position="233"/>
        <end position="237"/>
    </location>
</feature>
<feature type="helix" evidence="34">
    <location>
        <begin position="253"/>
        <end position="258"/>
    </location>
</feature>
<feature type="strand" evidence="34">
    <location>
        <begin position="259"/>
        <end position="261"/>
    </location>
</feature>
<feature type="strand" evidence="36">
    <location>
        <begin position="262"/>
        <end position="264"/>
    </location>
</feature>
<feature type="helix" evidence="34">
    <location>
        <begin position="268"/>
        <end position="280"/>
    </location>
</feature>
<feature type="strand" evidence="34">
    <location>
        <begin position="284"/>
        <end position="294"/>
    </location>
</feature>
<feature type="helix" evidence="34">
    <location>
        <begin position="298"/>
        <end position="301"/>
    </location>
</feature>
<feature type="strand" evidence="34">
    <location>
        <begin position="306"/>
        <end position="308"/>
    </location>
</feature>
<feature type="strand" evidence="34">
    <location>
        <begin position="318"/>
        <end position="322"/>
    </location>
</feature>
<feature type="helix" evidence="34">
    <location>
        <begin position="327"/>
        <end position="343"/>
    </location>
</feature>
<feature type="strand" evidence="34">
    <location>
        <begin position="346"/>
        <end position="352"/>
    </location>
</feature>
<feature type="helix" evidence="34">
    <location>
        <begin position="359"/>
        <end position="362"/>
    </location>
</feature>
<feature type="helix" evidence="34">
    <location>
        <begin position="365"/>
        <end position="373"/>
    </location>
</feature>
<feature type="helix" evidence="34">
    <location>
        <begin position="380"/>
        <end position="397"/>
    </location>
</feature>
<feature type="strand" evidence="34">
    <location>
        <begin position="401"/>
        <end position="405"/>
    </location>
</feature>
<feature type="helix" evidence="34">
    <location>
        <begin position="406"/>
        <end position="410"/>
    </location>
</feature>
<feature type="strand" evidence="34">
    <location>
        <begin position="420"/>
        <end position="423"/>
    </location>
</feature>
<feature type="helix" evidence="34">
    <location>
        <begin position="429"/>
        <end position="438"/>
    </location>
</feature>
<feature type="strand" evidence="34">
    <location>
        <begin position="443"/>
        <end position="445"/>
    </location>
</feature>
<feature type="helix" evidence="38">
    <location>
        <begin position="447"/>
        <end position="449"/>
    </location>
</feature>
<feature type="strand" evidence="37">
    <location>
        <begin position="450"/>
        <end position="453"/>
    </location>
</feature>
<feature type="strand" evidence="36">
    <location>
        <begin position="455"/>
        <end position="457"/>
    </location>
</feature>
<feature type="helix" evidence="34">
    <location>
        <begin position="460"/>
        <end position="465"/>
    </location>
</feature>
<feature type="helix" evidence="34">
    <location>
        <begin position="475"/>
        <end position="479"/>
    </location>
</feature>
<feature type="strand" evidence="34">
    <location>
        <begin position="481"/>
        <end position="488"/>
    </location>
</feature>
<feature type="helix" evidence="38">
    <location>
        <begin position="490"/>
        <end position="492"/>
    </location>
</feature>
<feature type="turn" evidence="34">
    <location>
        <begin position="495"/>
        <end position="497"/>
    </location>
</feature>
<feature type="helix" evidence="34">
    <location>
        <begin position="498"/>
        <end position="502"/>
    </location>
</feature>
<feature type="helix" evidence="34">
    <location>
        <begin position="505"/>
        <end position="514"/>
    </location>
</feature>
<feature type="helix" evidence="34">
    <location>
        <begin position="522"/>
        <end position="538"/>
    </location>
</feature>
<feature type="strand" evidence="34">
    <location>
        <begin position="546"/>
        <end position="548"/>
    </location>
</feature>
<reference key="1">
    <citation type="journal article" date="1986" name="J. Biol. Chem.">
        <title>Isolation of cDNA clones coding for the alpha-subunit of human beta-hexosaminidase. Extensive homology between the alpha- and beta-subunits and studies on Tay-Sachs disease.</title>
        <authorList>
            <person name="Korneluk R.G."/>
            <person name="Mahuran D.J."/>
            <person name="Neote K."/>
            <person name="Klavins M.H."/>
            <person name="O'Dowd B.F."/>
            <person name="Tropak M."/>
            <person name="Willard H.F."/>
            <person name="Anderson M.-J."/>
            <person name="Lowden J.A."/>
            <person name="Gravel R.A."/>
        </authorList>
    </citation>
    <scope>NUCLEOTIDE SEQUENCE [MRNA]</scope>
    <scope>VARIANT SER-62</scope>
</reference>
<reference key="2">
    <citation type="journal article" date="1988" name="Genomics">
        <title>Characterization of the human HEXB gene encoding lysosomal beta-hexosaminidase.</title>
        <authorList>
            <person name="Neote K."/>
            <person name="Bapat B."/>
            <person name="Dumbrille-Ross A."/>
            <person name="Troxel C."/>
            <person name="Schuster S.M."/>
            <person name="Mahuran D.J."/>
            <person name="Gravel R.A."/>
        </authorList>
    </citation>
    <scope>NUCLEOTIDE SEQUENCE [GENOMIC DNA]</scope>
    <scope>VARIANT SER-62</scope>
</reference>
<reference key="3">
    <citation type="journal article" date="1988" name="Proc. Natl. Acad. Sci. U.S.A.">
        <title>Gene encoding the human beta-hexosaminidase beta chain: extensive homology of intron placement in the alpha- and beta-chain genes.</title>
        <authorList>
            <person name="Proia R.L."/>
        </authorList>
    </citation>
    <scope>NUCLEOTIDE SEQUENCE [GENOMIC DNA]</scope>
    <scope>VARIANT SER-62</scope>
</reference>
<reference key="4">
    <citation type="submission" date="2001-05" db="EMBL/GenBank/DDBJ databases">
        <title>Identification of a new proto-oncogene in human cancers.</title>
        <authorList>
            <person name="Kim J.W."/>
        </authorList>
    </citation>
    <scope>NUCLEOTIDE SEQUENCE [LARGE SCALE MRNA]</scope>
    <scope>VARIANT SER-62</scope>
</reference>
<reference key="5">
    <citation type="submission" date="2003-08" db="EMBL/GenBank/DDBJ databases">
        <title>Cloning of human full-length CDSs in BD Creator(TM) system donor vector.</title>
        <authorList>
            <person name="Kalnine N."/>
            <person name="Chen X."/>
            <person name="Rolfs A."/>
            <person name="Halleck A."/>
            <person name="Hines L."/>
            <person name="Eisenstein S."/>
            <person name="Koundinya M."/>
            <person name="Raphael J."/>
            <person name="Moreira D."/>
            <person name="Kelley T."/>
            <person name="LaBaer J."/>
            <person name="Lin Y."/>
            <person name="Phelan M."/>
            <person name="Farmer A."/>
        </authorList>
    </citation>
    <scope>NUCLEOTIDE SEQUENCE [LARGE SCALE MRNA]</scope>
    <scope>VARIANT SER-62</scope>
</reference>
<reference key="6">
    <citation type="journal article" date="2004" name="Nature">
        <title>The DNA sequence and comparative analysis of human chromosome 5.</title>
        <authorList>
            <person name="Schmutz J."/>
            <person name="Martin J."/>
            <person name="Terry A."/>
            <person name="Couronne O."/>
            <person name="Grimwood J."/>
            <person name="Lowry S."/>
            <person name="Gordon L.A."/>
            <person name="Scott D."/>
            <person name="Xie G."/>
            <person name="Huang W."/>
            <person name="Hellsten U."/>
            <person name="Tran-Gyamfi M."/>
            <person name="She X."/>
            <person name="Prabhakar S."/>
            <person name="Aerts A."/>
            <person name="Altherr M."/>
            <person name="Bajorek E."/>
            <person name="Black S."/>
            <person name="Branscomb E."/>
            <person name="Caoile C."/>
            <person name="Challacombe J.F."/>
            <person name="Chan Y.M."/>
            <person name="Denys M."/>
            <person name="Detter J.C."/>
            <person name="Escobar J."/>
            <person name="Flowers D."/>
            <person name="Fotopulos D."/>
            <person name="Glavina T."/>
            <person name="Gomez M."/>
            <person name="Gonzales E."/>
            <person name="Goodstein D."/>
            <person name="Grigoriev I."/>
            <person name="Groza M."/>
            <person name="Hammon N."/>
            <person name="Hawkins T."/>
            <person name="Haydu L."/>
            <person name="Israni S."/>
            <person name="Jett J."/>
            <person name="Kadner K."/>
            <person name="Kimball H."/>
            <person name="Kobayashi A."/>
            <person name="Lopez F."/>
            <person name="Lou Y."/>
            <person name="Martinez D."/>
            <person name="Medina C."/>
            <person name="Morgan J."/>
            <person name="Nandkeshwar R."/>
            <person name="Noonan J.P."/>
            <person name="Pitluck S."/>
            <person name="Pollard M."/>
            <person name="Predki P."/>
            <person name="Priest J."/>
            <person name="Ramirez L."/>
            <person name="Retterer J."/>
            <person name="Rodriguez A."/>
            <person name="Rogers S."/>
            <person name="Salamov A."/>
            <person name="Salazar A."/>
            <person name="Thayer N."/>
            <person name="Tice H."/>
            <person name="Tsai M."/>
            <person name="Ustaszewska A."/>
            <person name="Vo N."/>
            <person name="Wheeler J."/>
            <person name="Wu K."/>
            <person name="Yang J."/>
            <person name="Dickson M."/>
            <person name="Cheng J.-F."/>
            <person name="Eichler E.E."/>
            <person name="Olsen A."/>
            <person name="Pennacchio L.A."/>
            <person name="Rokhsar D.S."/>
            <person name="Richardson P."/>
            <person name="Lucas S.M."/>
            <person name="Myers R.M."/>
            <person name="Rubin E.M."/>
        </authorList>
    </citation>
    <scope>NUCLEOTIDE SEQUENCE [LARGE SCALE GENOMIC DNA]</scope>
</reference>
<reference key="7">
    <citation type="journal article" date="2004" name="Genome Res.">
        <title>The status, quality, and expansion of the NIH full-length cDNA project: the Mammalian Gene Collection (MGC).</title>
        <authorList>
            <consortium name="The MGC Project Team"/>
        </authorList>
    </citation>
    <scope>NUCLEOTIDE SEQUENCE [LARGE SCALE MRNA]</scope>
    <scope>VARIANT SER-62</scope>
    <source>
        <tissue>Skin</tissue>
    </source>
</reference>
<reference key="8">
    <citation type="journal article" date="1988" name="J. Biol. Chem.">
        <title>Synthesis and assembly of a catalytically active lysosomal enzyme, beta-hexosaminidase B, in a cell-free system.</title>
        <authorList>
            <person name="Sonderfeld-Fresko S."/>
            <person name="Proia R.L."/>
        </authorList>
    </citation>
    <scope>NUCLEOTIDE SEQUENCE [MRNA] OF 1-67</scope>
    <scope>VARIANT SER-62</scope>
</reference>
<reference key="9">
    <citation type="journal article" date="1990" name="J. Biol. Chem.">
        <title>Translation initiation in the HEXB gene encoding the beta-subunit of human beta-hexosaminidase.</title>
        <authorList>
            <person name="Neote K."/>
            <person name="Brown C.A."/>
            <person name="Mahuran D.J."/>
            <person name="Gravel R.A."/>
        </authorList>
    </citation>
    <scope>NUCLEOTIDE SEQUENCE [GENOMIC DNA] OF 1-52</scope>
</reference>
<reference key="10">
    <citation type="journal article" date="1988" name="FEBS Lett.">
        <title>Localization of the pro-sequence within the total deduced primary structure of human beta-hexosaminidase B.</title>
        <authorList>
            <person name="Stirling J."/>
            <person name="Leung A."/>
            <person name="Gravel R.A."/>
            <person name="Mahuran D."/>
        </authorList>
    </citation>
    <scope>PROTEIN SEQUENCE OF 43-57 AND 122-151</scope>
</reference>
<reference key="11">
    <citation type="journal article" date="1990" name="J. Biol. Chem.">
        <title>Characterization of human placental beta-hexosaminidase I2. Proteolytic processing intermediates of hexosaminidase A.</title>
        <authorList>
            <person name="Mahuran D.J."/>
        </authorList>
    </citation>
    <scope>PROTEIN SEQUENCE OF 45-54 AND 315-324</scope>
</reference>
<reference key="12">
    <citation type="journal article" date="1989" name="FEBS Lett.">
        <title>The amino-terminal sequences in the pro-alpha and -beta polypeptides of human lysosomal beta-hexosaminidase A and B are retained in the mature isozymes.</title>
        <authorList>
            <person name="Hubbes M."/>
            <person name="Callahan J."/>
            <person name="Gravel R."/>
            <person name="Mahuran D."/>
        </authorList>
    </citation>
    <scope>PROTEIN SEQUENCE OF 50-59</scope>
</reference>
<reference key="13">
    <citation type="journal article" date="1988" name="J. Biol. Chem.">
        <title>Proteolytic processing of pro-alpha and pro-beta precursors from human beta-hexosaminidase. Generation of the mature alpha and beta a beta b subunits.</title>
        <authorList>
            <person name="Mahuran D.J."/>
            <person name="Neote K."/>
            <person name="Klavins M.H."/>
            <person name="Leung A."/>
            <person name="Gravel R.A."/>
        </authorList>
    </citation>
    <scope>PROTEIN SEQUENCE OF 122-151 AND 315-340</scope>
</reference>
<reference key="14">
    <citation type="journal article" date="1985" name="Proc. Natl. Acad. Sci. U.S.A.">
        <title>Isolation of cDNA clones coding for the beta subunit of human beta-hexosaminidase.</title>
        <authorList>
            <person name="O'Dowd B.F."/>
            <person name="Quan F."/>
            <person name="Willard H.F."/>
            <person name="Lamhonwah A.-M."/>
            <person name="Korneluk R.G."/>
            <person name="Lowden J.A."/>
            <person name="Gravel R.A."/>
            <person name="Mahuran D.J."/>
        </authorList>
    </citation>
    <scope>NUCLEOTIDE SEQUENCE [MRNA] OF 226-283</scope>
</reference>
<reference key="15">
    <citation type="journal article" date="1988" name="Biochemistry">
        <title>Oligosaccharide structure and amino acid sequence of the major glycopeptides of mature human beta-hexosaminidase.</title>
        <authorList>
            <person name="O'Dowd B.F."/>
            <person name="Cumming D.A."/>
            <person name="Gravel R.A."/>
            <person name="Mahuran D.J."/>
        </authorList>
    </citation>
    <scope>STRUCTURE OF CARBOHYDRATES</scope>
</reference>
<reference key="16">
    <citation type="journal article" date="1994" name="Biochim. Biophys. Acta">
        <title>Classification of disorders of GM2 ganglioside hydrolysis using 3H-GM2 as substrate.</title>
        <authorList>
            <person name="Novak A."/>
            <person name="Callahan J.W."/>
            <person name="Lowden J.A."/>
        </authorList>
    </citation>
    <scope>CATALYTIC ACTIVITY</scope>
    <scope>FUNCTION</scope>
</reference>
<reference key="17">
    <citation type="journal article" date="1996" name="Biochemistry">
        <title>Direct determination of the substrate specificity of the alpha-active site in heterodimeric beta-hexosaminidase A.</title>
        <authorList>
            <person name="Hou Y."/>
            <person name="Tse R."/>
            <person name="Mahuran D.J."/>
        </authorList>
    </citation>
    <scope>MUTAGENESIS OF ARG-211</scope>
    <scope>FUNCTION</scope>
    <scope>CATALYTIC ACTIVITY</scope>
    <scope>SUBUNIT</scope>
</reference>
<reference key="18">
    <citation type="journal article" date="2003" name="Nat. Biotechnol.">
        <title>Identification and quantification of N-linked glycoproteins using hydrazide chemistry, stable isotope labeling and mass spectrometry.</title>
        <authorList>
            <person name="Zhang H."/>
            <person name="Li X.-J."/>
            <person name="Martin D.B."/>
            <person name="Aebersold R."/>
        </authorList>
    </citation>
    <scope>GLYCOSYLATION AT ASN-327</scope>
</reference>
<reference key="19">
    <citation type="journal article" date="2001" name="Biochemistry">
        <title>Characterization of the Glu and Asp residues in the active site of human beta-hexosaminidase B.</title>
        <authorList>
            <person name="Hou Y."/>
            <person name="Vocadlo D.J."/>
            <person name="Leung A."/>
            <person name="Withers S.G."/>
            <person name="Mahuran D."/>
        </authorList>
    </citation>
    <scope>CATALYTIC ACTIVITY</scope>
    <scope>BIOPHYSICOCHEMICAL PROPERTIES</scope>
    <scope>ACTIVE SITE</scope>
    <scope>MUTAGENESIS OF ASP-241; ASP-354; GLU-355 AND GLU-491</scope>
</reference>
<reference key="20">
    <citation type="journal article" date="2001" name="Glycobiology">
        <title>Complete analysis of the glycosylation and disulfide bond pattern of human beta-hexosaminidase B by MALDI-MS.</title>
        <authorList>
            <person name="Schuette C.G."/>
            <person name="Weisgerber J."/>
            <person name="Sandhoff K."/>
        </authorList>
    </citation>
    <scope>DISULFIDE BONDS</scope>
    <scope>GLYCOSYLATION AT ASN-84; ASN-142; ASN-190 AND ASN-327</scope>
</reference>
<reference key="21">
    <citation type="journal article" date="2002" name="J. Biol. Chem.">
        <title>Physiological substrates for human lysosomal beta -hexosaminidase S.</title>
        <authorList>
            <person name="Hepbildikler S.T."/>
            <person name="Sandhoff R."/>
            <person name="Kolzer M."/>
            <person name="Proia R.L."/>
            <person name="Sandhoff K."/>
        </authorList>
    </citation>
    <scope>FUNCTION</scope>
    <scope>CATALYTIC ACTIVITY</scope>
    <scope>ACTIVITY REGULATION</scope>
</reference>
<reference key="22">
    <citation type="journal article" date="2009" name="J. Proteome Res.">
        <title>Glycoproteomics analysis of human liver tissue by combination of multiple enzyme digestion and hydrazide chemistry.</title>
        <authorList>
            <person name="Chen R."/>
            <person name="Jiang X."/>
            <person name="Sun D."/>
            <person name="Han G."/>
            <person name="Wang F."/>
            <person name="Ye M."/>
            <person name="Wang L."/>
            <person name="Zou H."/>
        </authorList>
    </citation>
    <scope>GLYCOSYLATION [LARGE SCALE ANALYSIS] AT ASN-84 AND ASN-327</scope>
    <source>
        <tissue>Liver</tissue>
    </source>
</reference>
<reference key="23">
    <citation type="journal article" date="2011" name="BMC Syst. Biol.">
        <title>Initial characterization of the human central proteome.</title>
        <authorList>
            <person name="Burkard T.R."/>
            <person name="Planyavsky M."/>
            <person name="Kaupe I."/>
            <person name="Breitwieser F.P."/>
            <person name="Buerckstuemmer T."/>
            <person name="Bennett K.L."/>
            <person name="Superti-Furga G."/>
            <person name="Colinge J."/>
        </authorList>
    </citation>
    <scope>IDENTIFICATION BY MASS SPECTROMETRY [LARGE SCALE ANALYSIS]</scope>
</reference>
<reference key="24">
    <citation type="journal article" date="2014" name="J. Proteomics">
        <title>An enzyme assisted RP-RPLC approach for in-depth analysis of human liver phosphoproteome.</title>
        <authorList>
            <person name="Bian Y."/>
            <person name="Song C."/>
            <person name="Cheng K."/>
            <person name="Dong M."/>
            <person name="Wang F."/>
            <person name="Huang J."/>
            <person name="Sun D."/>
            <person name="Wang L."/>
            <person name="Ye M."/>
            <person name="Zou H."/>
        </authorList>
    </citation>
    <scope>IDENTIFICATION BY MASS SPECTROMETRY [LARGE SCALE ANALYSIS]</scope>
    <source>
        <tissue>Liver</tissue>
    </source>
</reference>
<reference key="25">
    <citation type="journal article" date="2015" name="Proteomics">
        <title>N-terminome analysis of the human mitochondrial proteome.</title>
        <authorList>
            <person name="Vaca Jacome A.S."/>
            <person name="Rabilloud T."/>
            <person name="Schaeffer-Reiss C."/>
            <person name="Rompais M."/>
            <person name="Ayoub D."/>
            <person name="Lane L."/>
            <person name="Bairoch A."/>
            <person name="Van Dorsselaer A."/>
            <person name="Carapito C."/>
        </authorList>
    </citation>
    <scope>IDENTIFICATION BY MASS SPECTROMETRY [LARGE SCALE ANALYSIS]</scope>
</reference>
<reference key="26">
    <citation type="journal article" date="1996" name="Nat. Struct. Biol.">
        <title>Bacterial chitobiase structure provides insight into catalytic mechanism and the basis of Tay-Sachs disease.</title>
        <authorList>
            <person name="Tews I."/>
            <person name="Perrakis A."/>
            <person name="Oppenheim A."/>
            <person name="Dauter Z."/>
            <person name="Wilson K.S."/>
            <person name="Vorgias C.E."/>
        </authorList>
    </citation>
    <scope>3D-STRUCTURE MODELING</scope>
</reference>
<reference key="27">
    <citation type="journal article" date="2003" name="J. Mol. Biol.">
        <title>Crystal structure of human beta-hexosaminidase B: understanding the molecular basis of Sandhoff and Tay-Sachs disease.</title>
        <authorList>
            <person name="Mark B.L."/>
            <person name="Mahuran D.J."/>
            <person name="Cherney M.M."/>
            <person name="Zhao D."/>
            <person name="Knapp S."/>
            <person name="James M.N."/>
        </authorList>
    </citation>
    <scope>X-RAY CRYSTALLOGRAPHY (2.4 ANGSTROMS) OF 50-556</scope>
    <scope>DISULFIDE BONDS</scope>
</reference>
<reference key="28">
    <citation type="journal article" date="2003" name="J. Mol. Biol.">
        <title>The X-ray crystal structure of human beta-hexosaminidase B provides new insights into Sandhoff disease.</title>
        <authorList>
            <person name="Maier T."/>
            <person name="Strater N."/>
            <person name="Schuette C.G."/>
            <person name="Klingenstein R."/>
            <person name="Sandhoff K."/>
            <person name="Saenger W."/>
        </authorList>
    </citation>
    <scope>X-RAY CRYSTALLOGRAPHY (2.25 ANGSTROMS) OF 42-556</scope>
    <scope>DISULFIDE BONDS</scope>
</reference>
<reference key="29">
    <citation type="journal article" date="1991" name="Biochim. Biophys. Acta">
        <title>The biochemistry of HEXA and HEXB gene mutations causing GM2 gangliosidosis.</title>
        <authorList>
            <person name="Mahuran D.J."/>
        </authorList>
    </citation>
    <scope>REVIEW ON VARIANTS</scope>
</reference>
<reference key="30">
    <citation type="journal article" date="1991" name="Biochem. Biophys. Res. Commun.">
        <title>Molecular basis of an adult form of beta-hexosaminidase B deficiency with motor neuron disease.</title>
        <authorList>
            <person name="Banerjee P."/>
            <person name="Siciliano L."/>
            <person name="Oliveri D."/>
            <person name="McCabe N.R."/>
            <person name="Boyers M.J."/>
            <person name="Horwitz A.L."/>
            <person name="Li S.-C."/>
            <person name="Dawson G."/>
        </authorList>
    </citation>
    <scope>VARIANT GM2G2 SER-456</scope>
    <scope>VARIANT VAL-207</scope>
</reference>
<reference key="31">
    <citation type="journal article" date="1992" name="J. Biol. Chem.">
        <title>A novel exon mutation in the human beta-hexosaminidase beta subunit gene affects 3' splice site selection.</title>
        <authorList>
            <person name="Wakamatsu N."/>
            <person name="Kobayashi H."/>
            <person name="Miyatake T."/>
            <person name="Tsuji S."/>
        </authorList>
    </citation>
    <scope>VARIANT GM2G2 LEU-417</scope>
</reference>
<reference key="32">
    <citation type="journal article" date="1993" name="Biochim. Biophys. Acta">
        <title>Molecular basis of an adult form of Sandhoff disease: substitution of glutamine for arginine at position 505 of the beta-chain of beta-hexosaminidase results in a labile enzyme.</title>
        <authorList>
            <person name="Bolhuis P.A."/>
            <person name="Ponne N.J."/>
            <person name="Bikker H."/>
            <person name="Baas F."/>
            <person name="Vianney de Jong J.M.B."/>
        </authorList>
    </citation>
    <scope>VARIANT GM2G2 GLN-505</scope>
</reference>
<reference key="33">
    <citation type="journal article" date="1995" name="Biochem. Biophys. Res. Commun.">
        <title>A novel missense mutation (C522Y) is present in the beta-hexosaminidase beta-subunit gene of a Japanese patient with infantile Sandhoff disease.</title>
        <authorList>
            <person name="Kuroki Y."/>
            <person name="Itoh K."/>
            <person name="Nadaoka Y."/>
            <person name="Tanaka T."/>
            <person name="Sakuraba H."/>
        </authorList>
    </citation>
    <scope>VARIANT GM2G2 TYR-534</scope>
</reference>
<reference key="34">
    <citation type="journal article" date="1995" name="Hum. Genet.">
        <title>A common beta hexosaminidase gene mutation in adult Sandhoff disease patients.</title>
        <authorList>
            <person name="Gomez-Lira M."/>
            <person name="Sangalli A."/>
            <person name="Mottes M."/>
            <person name="Perusi C."/>
            <person name="Pignatti P.F."/>
            <person name="Rizzuto N."/>
            <person name="Salviati A."/>
        </authorList>
    </citation>
    <scope>VARIANTS GM2G2 TYR-309 AND LEU-417</scope>
</reference>
<reference key="35">
    <citation type="journal article" date="1995" name="Hum. Mol. Genet.">
        <title>A second, large deletion in the HEXB gene in a patient with infantile Sandhoff disease.</title>
        <authorList>
            <person name="Zhang Z.-X."/>
            <person name="Wakamatsu N."/>
            <person name="Akerman B.R."/>
            <person name="Mules E.H."/>
            <person name="Thomas G.H."/>
            <person name="Gravel R.A."/>
        </authorList>
    </citation>
    <scope>INVOLVEMENT IN GM2G2</scope>
    <scope>VARIANT SER-62</scope>
</reference>
<reference key="36">
    <citation type="journal article" date="1996" name="Biochim. Biophys. Acta">
        <title>Significance of two point mutations present in each HEXB allele of patients with adult GM2 gangliosidosis (Sandhoff disease) homozygosity for the Ile207--&gt;Val substitution is not associated with a clinical or biochemical phenotype.</title>
        <authorList>
            <person name="Redonnet-Vernhet I."/>
            <person name="Mahuran D.J."/>
            <person name="Salvayre R."/>
            <person name="Dubas F."/>
            <person name="Levade T."/>
        </authorList>
    </citation>
    <scope>VARIANT GM2G2 GLN-505</scope>
    <scope>VARIANT VAL-207</scope>
</reference>
<reference key="37">
    <citation type="journal article" date="1997" name="Hum. Mutat.">
        <title>Molecular basis of heat labile hexosaminidase B among Jews and Arabs.</title>
        <authorList>
            <person name="Narkis G."/>
            <person name="Adam A."/>
            <person name="Jaber L."/>
            <person name="Pennybacker M."/>
            <person name="Proia R.L."/>
            <person name="Navon R."/>
        </authorList>
    </citation>
    <scope>VARIANT GM2G2 THR-543</scope>
</reference>
<reference key="38">
    <citation type="journal article" date="1998" name="Hum. Genet.">
        <title>Two mutations remote from an exon/intron junction in the beta-hexosaminidase beta-subunit gene affect 3'-splice site selection and cause Sandhoff disease.</title>
        <authorList>
            <person name="Fujimaru M."/>
            <person name="Tanaka A."/>
            <person name="Choeh K."/>
            <person name="Wakamatsu N."/>
            <person name="Sakuraba H."/>
            <person name="Isshiki G."/>
        </authorList>
    </citation>
    <scope>VARIANT GM2G2 ARG-255</scope>
</reference>
<reference key="39">
    <citation type="journal article" date="1998" name="J. Biol. Chem.">
        <title>A Pro504 --&gt; Ser substitution in the beta-subunit of beta-hexosaminidase A inhibits alpha-subunit hydrolysis of GM2 ganglioside, resulting in chronic Sandhoff disease.</title>
        <authorList>
            <person name="Hou Y."/>
            <person name="McInnes B."/>
            <person name="Hinek A."/>
            <person name="Karpati G."/>
            <person name="Mahuran D."/>
        </authorList>
    </citation>
    <scope>VARIANT GM2G2 SER-504</scope>
    <scope>CATALYTIC ACTIVITY</scope>
    <scope>FUNCTION</scope>
    <scope>CHARACTERIZATION OF VARIANT GM2G2 SER-504</scope>
    <scope>SUBCELLULAR LOCATION</scope>
</reference>
<organism>
    <name type="scientific">Homo sapiens</name>
    <name type="common">Human</name>
    <dbReference type="NCBI Taxonomy" id="9606"/>
    <lineage>
        <taxon>Eukaryota</taxon>
        <taxon>Metazoa</taxon>
        <taxon>Chordata</taxon>
        <taxon>Craniata</taxon>
        <taxon>Vertebrata</taxon>
        <taxon>Euteleostomi</taxon>
        <taxon>Mammalia</taxon>
        <taxon>Eutheria</taxon>
        <taxon>Euarchontoglires</taxon>
        <taxon>Primates</taxon>
        <taxon>Haplorrhini</taxon>
        <taxon>Catarrhini</taxon>
        <taxon>Hominidae</taxon>
        <taxon>Homo</taxon>
    </lineage>
</organism>
<dbReference type="EC" id="3.2.1.52" evidence="4 6 21 23 26"/>
<dbReference type="EMBL" id="M13519">
    <property type="protein sequence ID" value="AAA51828.1"/>
    <property type="status" value="ALT_FRAME"/>
    <property type="molecule type" value="mRNA"/>
</dbReference>
<dbReference type="EMBL" id="M23294">
    <property type="protein sequence ID" value="AAA52645.1"/>
    <property type="molecule type" value="Genomic_DNA"/>
</dbReference>
<dbReference type="EMBL" id="M23282">
    <property type="protein sequence ID" value="AAA52645.1"/>
    <property type="status" value="JOINED"/>
    <property type="molecule type" value="Genomic_DNA"/>
</dbReference>
<dbReference type="EMBL" id="M23283">
    <property type="protein sequence ID" value="AAA52645.1"/>
    <property type="status" value="JOINED"/>
    <property type="molecule type" value="Genomic_DNA"/>
</dbReference>
<dbReference type="EMBL" id="M23284">
    <property type="protein sequence ID" value="AAA52645.1"/>
    <property type="status" value="JOINED"/>
    <property type="molecule type" value="Genomic_DNA"/>
</dbReference>
<dbReference type="EMBL" id="M23285">
    <property type="protein sequence ID" value="AAA52645.1"/>
    <property type="status" value="JOINED"/>
    <property type="molecule type" value="Genomic_DNA"/>
</dbReference>
<dbReference type="EMBL" id="M23286">
    <property type="protein sequence ID" value="AAA52645.1"/>
    <property type="status" value="JOINED"/>
    <property type="molecule type" value="Genomic_DNA"/>
</dbReference>
<dbReference type="EMBL" id="M23287">
    <property type="protein sequence ID" value="AAA52645.1"/>
    <property type="status" value="JOINED"/>
    <property type="molecule type" value="Genomic_DNA"/>
</dbReference>
<dbReference type="EMBL" id="M23288">
    <property type="protein sequence ID" value="AAA52645.1"/>
    <property type="status" value="JOINED"/>
    <property type="molecule type" value="Genomic_DNA"/>
</dbReference>
<dbReference type="EMBL" id="M23290">
    <property type="protein sequence ID" value="AAA52645.1"/>
    <property type="status" value="JOINED"/>
    <property type="molecule type" value="Genomic_DNA"/>
</dbReference>
<dbReference type="EMBL" id="M23291">
    <property type="protein sequence ID" value="AAA52645.1"/>
    <property type="status" value="JOINED"/>
    <property type="molecule type" value="Genomic_DNA"/>
</dbReference>
<dbReference type="EMBL" id="M23292">
    <property type="protein sequence ID" value="AAA52645.1"/>
    <property type="status" value="JOINED"/>
    <property type="molecule type" value="Genomic_DNA"/>
</dbReference>
<dbReference type="EMBL" id="M23293">
    <property type="protein sequence ID" value="AAA52645.1"/>
    <property type="status" value="JOINED"/>
    <property type="molecule type" value="Genomic_DNA"/>
</dbReference>
<dbReference type="EMBL" id="M19735">
    <property type="protein sequence ID" value="AAA68620.1"/>
    <property type="molecule type" value="mRNA"/>
</dbReference>
<dbReference type="EMBL" id="AF378118">
    <property type="protein sequence ID" value="AAM46114.1"/>
    <property type="molecule type" value="mRNA"/>
</dbReference>
<dbReference type="EMBL" id="BT009919">
    <property type="protein sequence ID" value="AAP88921.1"/>
    <property type="molecule type" value="mRNA"/>
</dbReference>
<dbReference type="EMBL" id="AC026405">
    <property type="status" value="NOT_ANNOTATED_CDS"/>
    <property type="molecule type" value="Genomic_DNA"/>
</dbReference>
<dbReference type="EMBL" id="AC093214">
    <property type="status" value="NOT_ANNOTATED_CDS"/>
    <property type="molecule type" value="Genomic_DNA"/>
</dbReference>
<dbReference type="EMBL" id="BC017378">
    <property type="protein sequence ID" value="AAH17378.1"/>
    <property type="molecule type" value="mRNA"/>
</dbReference>
<dbReference type="EMBL" id="M34906">
    <property type="protein sequence ID" value="AAA51829.1"/>
    <property type="molecule type" value="mRNA"/>
</dbReference>
<dbReference type="CCDS" id="CCDS4022.1"/>
<dbReference type="PIR" id="A31250">
    <property type="entry name" value="A31250"/>
</dbReference>
<dbReference type="RefSeq" id="NP_000512.2">
    <property type="nucleotide sequence ID" value="NM_000521.4"/>
</dbReference>
<dbReference type="RefSeq" id="NP_001278933.1">
    <property type="nucleotide sequence ID" value="NM_001292004.1"/>
</dbReference>
<dbReference type="PDB" id="1NOU">
    <property type="method" value="X-ray"/>
    <property type="resolution" value="2.40 A"/>
    <property type="chains" value="A/B=50-556"/>
</dbReference>
<dbReference type="PDB" id="1NOW">
    <property type="method" value="X-ray"/>
    <property type="resolution" value="2.20 A"/>
    <property type="chains" value="A/B=50-556"/>
</dbReference>
<dbReference type="PDB" id="1NP0">
    <property type="method" value="X-ray"/>
    <property type="resolution" value="2.50 A"/>
    <property type="chains" value="A/B=50-556"/>
</dbReference>
<dbReference type="PDB" id="1O7A">
    <property type="method" value="X-ray"/>
    <property type="resolution" value="2.25 A"/>
    <property type="chains" value="A/B/C/D/E/F=42-556"/>
</dbReference>
<dbReference type="PDB" id="2GJX">
    <property type="method" value="X-ray"/>
    <property type="resolution" value="2.80 A"/>
    <property type="chains" value="B/C/F/G=50-556"/>
</dbReference>
<dbReference type="PDB" id="2GK1">
    <property type="method" value="X-ray"/>
    <property type="resolution" value="3.25 A"/>
    <property type="chains" value="B/D/F/H=50-552"/>
</dbReference>
<dbReference type="PDB" id="3LMY">
    <property type="method" value="X-ray"/>
    <property type="resolution" value="2.80 A"/>
    <property type="chains" value="A/B=1-556"/>
</dbReference>
<dbReference type="PDB" id="5BRO">
    <property type="method" value="X-ray"/>
    <property type="resolution" value="2.40 A"/>
    <property type="chains" value="A=43-556"/>
</dbReference>
<dbReference type="PDBsum" id="1NOU"/>
<dbReference type="PDBsum" id="1NOW"/>
<dbReference type="PDBsum" id="1NP0"/>
<dbReference type="PDBsum" id="1O7A"/>
<dbReference type="PDBsum" id="2GJX"/>
<dbReference type="PDBsum" id="2GK1"/>
<dbReference type="PDBsum" id="3LMY"/>
<dbReference type="PDBsum" id="5BRO"/>
<dbReference type="SMR" id="P07686"/>
<dbReference type="BioGRID" id="109323">
    <property type="interactions" value="66"/>
</dbReference>
<dbReference type="ComplexPortal" id="CPX-502">
    <property type="entry name" value="Beta-hexosaminidase A complex"/>
</dbReference>
<dbReference type="ComplexPortal" id="CPX-686">
    <property type="entry name" value="Beta-hexosaminidase B complex"/>
</dbReference>
<dbReference type="CORUM" id="P07686"/>
<dbReference type="ELM" id="P07686"/>
<dbReference type="FunCoup" id="P07686">
    <property type="interactions" value="850"/>
</dbReference>
<dbReference type="IntAct" id="P07686">
    <property type="interactions" value="49"/>
</dbReference>
<dbReference type="MINT" id="P07686"/>
<dbReference type="STRING" id="9606.ENSP00000261416"/>
<dbReference type="BindingDB" id="P07686"/>
<dbReference type="ChEMBL" id="CHEMBL5877"/>
<dbReference type="DrugBank" id="DB03861">
    <property type="generic name" value="(2R,3R,4S,5R)-2-acetamido-3,4-dihydroxy-5-hydroxymethyl-piperidine"/>
</dbReference>
<dbReference type="DrugBank" id="DB02813">
    <property type="generic name" value="2-Acetamido-2-Deoxy-D-Glucono-1,5-Lactone"/>
</dbReference>
<dbReference type="DrugBank" id="DB09301">
    <property type="generic name" value="Chondroitin sulfate"/>
</dbReference>
<dbReference type="DrugBank" id="DB03747">
    <property type="generic name" value="N-Acetyl-glucosamine thiazoline"/>
</dbReference>
<dbReference type="DrugBank" id="DB00205">
    <property type="generic name" value="Pyrimethamine"/>
</dbReference>
<dbReference type="DrugCentral" id="P07686"/>
<dbReference type="CAZy" id="GH20">
    <property type="family name" value="Glycoside Hydrolase Family 20"/>
</dbReference>
<dbReference type="GlyConnect" id="1039">
    <property type="glycosylation" value="4 N-Linked glycans (3 sites)"/>
</dbReference>
<dbReference type="GlyCosmos" id="P07686">
    <property type="glycosylation" value="4 sites, 13 glycans"/>
</dbReference>
<dbReference type="GlyGen" id="P07686">
    <property type="glycosylation" value="9 sites, 46 N-linked glycans (4 sites), 1 O-linked glycan (1 site)"/>
</dbReference>
<dbReference type="iPTMnet" id="P07686"/>
<dbReference type="MetOSite" id="P07686"/>
<dbReference type="PhosphoSitePlus" id="P07686"/>
<dbReference type="SwissPalm" id="P07686"/>
<dbReference type="BioMuta" id="HEXB"/>
<dbReference type="DMDM" id="123081"/>
<dbReference type="CPTAC" id="CPTAC-78"/>
<dbReference type="CPTAC" id="CPTAC-79"/>
<dbReference type="jPOST" id="P07686"/>
<dbReference type="MassIVE" id="P07686"/>
<dbReference type="PaxDb" id="9606-ENSP00000261416"/>
<dbReference type="PeptideAtlas" id="P07686"/>
<dbReference type="ProteomicsDB" id="52022"/>
<dbReference type="Pumba" id="P07686"/>
<dbReference type="TopDownProteomics" id="P07686"/>
<dbReference type="Antibodypedia" id="24338">
    <property type="antibodies" value="255 antibodies from 34 providers"/>
</dbReference>
<dbReference type="DNASU" id="3074"/>
<dbReference type="Ensembl" id="ENST00000261416.12">
    <property type="protein sequence ID" value="ENSP00000261416.7"/>
    <property type="gene ID" value="ENSG00000049860.14"/>
</dbReference>
<dbReference type="GeneID" id="3074"/>
<dbReference type="KEGG" id="hsa:3074"/>
<dbReference type="MANE-Select" id="ENST00000261416.12">
    <property type="protein sequence ID" value="ENSP00000261416.7"/>
    <property type="RefSeq nucleotide sequence ID" value="NM_000521.4"/>
    <property type="RefSeq protein sequence ID" value="NP_000512.2"/>
</dbReference>
<dbReference type="UCSC" id="uc003kdf.4">
    <property type="organism name" value="human"/>
</dbReference>
<dbReference type="AGR" id="HGNC:4879"/>
<dbReference type="CTD" id="3074"/>
<dbReference type="DisGeNET" id="3074"/>
<dbReference type="GeneCards" id="HEXB"/>
<dbReference type="GeneReviews" id="HEXB"/>
<dbReference type="HGNC" id="HGNC:4879">
    <property type="gene designation" value="HEXB"/>
</dbReference>
<dbReference type="HPA" id="ENSG00000049860">
    <property type="expression patterns" value="Low tissue specificity"/>
</dbReference>
<dbReference type="MalaCards" id="HEXB"/>
<dbReference type="MIM" id="268800">
    <property type="type" value="phenotype"/>
</dbReference>
<dbReference type="MIM" id="606873">
    <property type="type" value="gene"/>
</dbReference>
<dbReference type="neXtProt" id="NX_P07686"/>
<dbReference type="OpenTargets" id="ENSG00000049860"/>
<dbReference type="Orphanet" id="309169">
    <property type="disease" value="Sandhoff disease, adult form"/>
</dbReference>
<dbReference type="Orphanet" id="309155">
    <property type="disease" value="Sandhoff disease, infantile form"/>
</dbReference>
<dbReference type="Orphanet" id="309162">
    <property type="disease" value="Sandhoff disease, juvenile form"/>
</dbReference>
<dbReference type="PharmGKB" id="PA29257"/>
<dbReference type="VEuPathDB" id="HostDB:ENSG00000049860"/>
<dbReference type="eggNOG" id="KOG2499">
    <property type="taxonomic scope" value="Eukaryota"/>
</dbReference>
<dbReference type="GeneTree" id="ENSGT00390000008107"/>
<dbReference type="HOGENOM" id="CLU_007082_0_3_1"/>
<dbReference type="InParanoid" id="P07686"/>
<dbReference type="OMA" id="GHDVVMC"/>
<dbReference type="OrthoDB" id="428480at2759"/>
<dbReference type="PAN-GO" id="P07686">
    <property type="GO annotations" value="5 GO annotations based on evolutionary models"/>
</dbReference>
<dbReference type="PhylomeDB" id="P07686"/>
<dbReference type="TreeFam" id="TF313036"/>
<dbReference type="BioCyc" id="MetaCyc:HS00629-MONOMER"/>
<dbReference type="BRENDA" id="3.2.1.52">
    <property type="organism ID" value="2681"/>
</dbReference>
<dbReference type="PathwayCommons" id="P07686"/>
<dbReference type="Reactome" id="R-HSA-2022857">
    <property type="pathway name" value="Keratan sulfate degradation"/>
</dbReference>
<dbReference type="Reactome" id="R-HSA-2024101">
    <property type="pathway name" value="CS/DS degradation"/>
</dbReference>
<dbReference type="Reactome" id="R-HSA-2160916">
    <property type="pathway name" value="Hyaluronan uptake and degradation"/>
</dbReference>
<dbReference type="Reactome" id="R-HSA-3656248">
    <property type="pathway name" value="Defective HEXB causes GM2G2"/>
</dbReference>
<dbReference type="Reactome" id="R-HSA-6798695">
    <property type="pathway name" value="Neutrophil degranulation"/>
</dbReference>
<dbReference type="Reactome" id="R-HSA-9840310">
    <property type="pathway name" value="Glycosphingolipid catabolism"/>
</dbReference>
<dbReference type="SABIO-RK" id="P07686"/>
<dbReference type="SignaLink" id="P07686"/>
<dbReference type="BioGRID-ORCS" id="3074">
    <property type="hits" value="16 hits in 1163 CRISPR screens"/>
</dbReference>
<dbReference type="ChiTaRS" id="HEXB">
    <property type="organism name" value="human"/>
</dbReference>
<dbReference type="EvolutionaryTrace" id="P07686"/>
<dbReference type="GeneWiki" id="HEXB"/>
<dbReference type="GenomeRNAi" id="3074"/>
<dbReference type="Pharos" id="P07686">
    <property type="development level" value="Tchem"/>
</dbReference>
<dbReference type="PRO" id="PR:P07686"/>
<dbReference type="Proteomes" id="UP000005640">
    <property type="component" value="Chromosome 5"/>
</dbReference>
<dbReference type="RNAct" id="P07686">
    <property type="molecule type" value="protein"/>
</dbReference>
<dbReference type="Bgee" id="ENSG00000049860">
    <property type="expression patterns" value="Expressed in placenta and 198 other cell types or tissues"/>
</dbReference>
<dbReference type="ExpressionAtlas" id="P07686">
    <property type="expression patterns" value="baseline and differential"/>
</dbReference>
<dbReference type="GO" id="GO:0001669">
    <property type="term" value="C:acrosomal vesicle"/>
    <property type="evidence" value="ECO:0007669"/>
    <property type="project" value="Ensembl"/>
</dbReference>
<dbReference type="GO" id="GO:0042582">
    <property type="term" value="C:azurophil granule"/>
    <property type="evidence" value="ECO:0000314"/>
    <property type="project" value="UniProtKB"/>
</dbReference>
<dbReference type="GO" id="GO:0035578">
    <property type="term" value="C:azurophil granule lumen"/>
    <property type="evidence" value="ECO:0000304"/>
    <property type="project" value="Reactome"/>
</dbReference>
<dbReference type="GO" id="GO:1905379">
    <property type="term" value="C:beta-N-acetylhexosaminidase complex"/>
    <property type="evidence" value="ECO:0000353"/>
    <property type="project" value="ComplexPortal"/>
</dbReference>
<dbReference type="GO" id="GO:0060473">
    <property type="term" value="C:cortical granule"/>
    <property type="evidence" value="ECO:0000250"/>
    <property type="project" value="UniProtKB"/>
</dbReference>
<dbReference type="GO" id="GO:0070062">
    <property type="term" value="C:extracellular exosome"/>
    <property type="evidence" value="ECO:0007005"/>
    <property type="project" value="UniProtKB"/>
</dbReference>
<dbReference type="GO" id="GO:0005576">
    <property type="term" value="C:extracellular region"/>
    <property type="evidence" value="ECO:0000304"/>
    <property type="project" value="Reactome"/>
</dbReference>
<dbReference type="GO" id="GO:0043202">
    <property type="term" value="C:lysosomal lumen"/>
    <property type="evidence" value="ECO:0000304"/>
    <property type="project" value="Reactome"/>
</dbReference>
<dbReference type="GO" id="GO:0005764">
    <property type="term" value="C:lysosome"/>
    <property type="evidence" value="ECO:0000318"/>
    <property type="project" value="GO_Central"/>
</dbReference>
<dbReference type="GO" id="GO:0016020">
    <property type="term" value="C:membrane"/>
    <property type="evidence" value="ECO:0007005"/>
    <property type="project" value="UniProtKB"/>
</dbReference>
<dbReference type="GO" id="GO:0008375">
    <property type="term" value="F:acetylglucosaminyltransferase activity"/>
    <property type="evidence" value="ECO:0000314"/>
    <property type="project" value="UniProtKB"/>
</dbReference>
<dbReference type="GO" id="GO:0016231">
    <property type="term" value="F:beta-N-acetylglucosaminidase activity"/>
    <property type="evidence" value="ECO:0007669"/>
    <property type="project" value="Ensembl"/>
</dbReference>
<dbReference type="GO" id="GO:0004563">
    <property type="term" value="F:beta-N-acetylhexosaminidase activity"/>
    <property type="evidence" value="ECO:0000314"/>
    <property type="project" value="UniProtKB"/>
</dbReference>
<dbReference type="GO" id="GO:0030246">
    <property type="term" value="F:carbohydrate binding"/>
    <property type="evidence" value="ECO:0007669"/>
    <property type="project" value="Ensembl"/>
</dbReference>
<dbReference type="GO" id="GO:0042802">
    <property type="term" value="F:identical protein binding"/>
    <property type="evidence" value="ECO:0000314"/>
    <property type="project" value="MGI"/>
</dbReference>
<dbReference type="GO" id="GO:0044877">
    <property type="term" value="F:protein-containing complex binding"/>
    <property type="evidence" value="ECO:0007669"/>
    <property type="project" value="Ensembl"/>
</dbReference>
<dbReference type="GO" id="GO:0043615">
    <property type="term" value="P:astrocyte cell migration"/>
    <property type="evidence" value="ECO:0007669"/>
    <property type="project" value="Ensembl"/>
</dbReference>
<dbReference type="GO" id="GO:0030207">
    <property type="term" value="P:chondroitin sulfate proteoglycan catabolic process"/>
    <property type="evidence" value="ECO:0007669"/>
    <property type="project" value="Ensembl"/>
</dbReference>
<dbReference type="GO" id="GO:0030209">
    <property type="term" value="P:dermatan sulfate proteoglycan catabolic process"/>
    <property type="evidence" value="ECO:0007669"/>
    <property type="project" value="Ensembl"/>
</dbReference>
<dbReference type="GO" id="GO:0006689">
    <property type="term" value="P:ganglioside catabolic process"/>
    <property type="evidence" value="ECO:0000314"/>
    <property type="project" value="UniProtKB"/>
</dbReference>
<dbReference type="GO" id="GO:0030203">
    <property type="term" value="P:glycosaminoglycan metabolic process"/>
    <property type="evidence" value="ECO:0000314"/>
    <property type="project" value="ComplexPortal"/>
</dbReference>
<dbReference type="GO" id="GO:0030214">
    <property type="term" value="P:hyaluronan catabolic process"/>
    <property type="evidence" value="ECO:0007669"/>
    <property type="project" value="Ensembl"/>
</dbReference>
<dbReference type="GO" id="GO:0006874">
    <property type="term" value="P:intracellular calcium ion homeostasis"/>
    <property type="evidence" value="ECO:0007669"/>
    <property type="project" value="Ensembl"/>
</dbReference>
<dbReference type="GO" id="GO:0019915">
    <property type="term" value="P:lipid storage"/>
    <property type="evidence" value="ECO:0007669"/>
    <property type="project" value="Ensembl"/>
</dbReference>
<dbReference type="GO" id="GO:0007626">
    <property type="term" value="P:locomotory behavior"/>
    <property type="evidence" value="ECO:0007669"/>
    <property type="project" value="Ensembl"/>
</dbReference>
<dbReference type="GO" id="GO:0007040">
    <property type="term" value="P:lysosome organization"/>
    <property type="evidence" value="ECO:0007669"/>
    <property type="project" value="Ensembl"/>
</dbReference>
<dbReference type="GO" id="GO:0008049">
    <property type="term" value="P:male courtship behavior"/>
    <property type="evidence" value="ECO:0007669"/>
    <property type="project" value="Ensembl"/>
</dbReference>
<dbReference type="GO" id="GO:0042552">
    <property type="term" value="P:myelination"/>
    <property type="evidence" value="ECO:0007669"/>
    <property type="project" value="Ensembl"/>
</dbReference>
<dbReference type="GO" id="GO:0006044">
    <property type="term" value="P:N-acetylglucosamine metabolic process"/>
    <property type="evidence" value="ECO:0007669"/>
    <property type="project" value="Ensembl"/>
</dbReference>
<dbReference type="GO" id="GO:0006491">
    <property type="term" value="P:N-glycan processing"/>
    <property type="evidence" value="ECO:0000318"/>
    <property type="project" value="GO_Central"/>
</dbReference>
<dbReference type="GO" id="GO:0050885">
    <property type="term" value="P:neuromuscular process controlling balance"/>
    <property type="evidence" value="ECO:0007669"/>
    <property type="project" value="Ensembl"/>
</dbReference>
<dbReference type="GO" id="GO:0070050">
    <property type="term" value="P:neuron cellular homeostasis"/>
    <property type="evidence" value="ECO:0007669"/>
    <property type="project" value="Ensembl"/>
</dbReference>
<dbReference type="GO" id="GO:0009313">
    <property type="term" value="P:oligosaccharide catabolic process"/>
    <property type="evidence" value="ECO:0007669"/>
    <property type="project" value="Ensembl"/>
</dbReference>
<dbReference type="GO" id="GO:0048477">
    <property type="term" value="P:oogenesis"/>
    <property type="evidence" value="ECO:0007669"/>
    <property type="project" value="Ensembl"/>
</dbReference>
<dbReference type="GO" id="GO:0007341">
    <property type="term" value="P:penetration of zona pellucida"/>
    <property type="evidence" value="ECO:0007669"/>
    <property type="project" value="Ensembl"/>
</dbReference>
<dbReference type="GO" id="GO:0008654">
    <property type="term" value="P:phospholipid biosynthetic process"/>
    <property type="evidence" value="ECO:0007669"/>
    <property type="project" value="Ensembl"/>
</dbReference>
<dbReference type="GO" id="GO:0045944">
    <property type="term" value="P:positive regulation of transcription by RNA polymerase II"/>
    <property type="evidence" value="ECO:0007669"/>
    <property type="project" value="Ensembl"/>
</dbReference>
<dbReference type="GO" id="GO:0008360">
    <property type="term" value="P:regulation of cell shape"/>
    <property type="evidence" value="ECO:0007669"/>
    <property type="project" value="Ensembl"/>
</dbReference>
<dbReference type="GO" id="GO:0007605">
    <property type="term" value="P:sensory perception of sound"/>
    <property type="evidence" value="ECO:0007669"/>
    <property type="project" value="Ensembl"/>
</dbReference>
<dbReference type="GO" id="GO:0007338">
    <property type="term" value="P:single fertilization"/>
    <property type="evidence" value="ECO:0000250"/>
    <property type="project" value="UniProtKB"/>
</dbReference>
<dbReference type="GO" id="GO:0001501">
    <property type="term" value="P:skeletal system development"/>
    <property type="evidence" value="ECO:0007669"/>
    <property type="project" value="Ensembl"/>
</dbReference>
<dbReference type="CDD" id="cd06562">
    <property type="entry name" value="GH20_HexA_HexB-like"/>
    <property type="match status" value="1"/>
</dbReference>
<dbReference type="FunFam" id="3.20.20.80:FF:000049">
    <property type="entry name" value="Beta-hexosaminidase A"/>
    <property type="match status" value="1"/>
</dbReference>
<dbReference type="FunFam" id="3.30.379.10:FF:000001">
    <property type="entry name" value="Beta-hexosaminidase subunit beta"/>
    <property type="match status" value="1"/>
</dbReference>
<dbReference type="Gene3D" id="3.30.379.10">
    <property type="entry name" value="Chitobiase/beta-hexosaminidase domain 2-like"/>
    <property type="match status" value="1"/>
</dbReference>
<dbReference type="Gene3D" id="3.20.20.80">
    <property type="entry name" value="Glycosidases"/>
    <property type="match status" value="1"/>
</dbReference>
<dbReference type="InterPro" id="IPR025705">
    <property type="entry name" value="Beta_hexosaminidase_sua/sub"/>
</dbReference>
<dbReference type="InterPro" id="IPR015883">
    <property type="entry name" value="Glyco_hydro_20_cat"/>
</dbReference>
<dbReference type="InterPro" id="IPR017853">
    <property type="entry name" value="Glycoside_hydrolase_SF"/>
</dbReference>
<dbReference type="InterPro" id="IPR029018">
    <property type="entry name" value="Hex-like_dom2"/>
</dbReference>
<dbReference type="InterPro" id="IPR029019">
    <property type="entry name" value="HEX_eukaryotic_N"/>
</dbReference>
<dbReference type="PANTHER" id="PTHR22600">
    <property type="entry name" value="BETA-HEXOSAMINIDASE"/>
    <property type="match status" value="1"/>
</dbReference>
<dbReference type="PANTHER" id="PTHR22600:SF38">
    <property type="entry name" value="BETA-HEXOSAMINIDASE SUBUNIT BETA"/>
    <property type="match status" value="1"/>
</dbReference>
<dbReference type="Pfam" id="PF00728">
    <property type="entry name" value="Glyco_hydro_20"/>
    <property type="match status" value="1"/>
</dbReference>
<dbReference type="Pfam" id="PF14845">
    <property type="entry name" value="Glycohydro_20b2"/>
    <property type="match status" value="1"/>
</dbReference>
<dbReference type="PIRSF" id="PIRSF001093">
    <property type="entry name" value="B-hxosamndse_ab_euk"/>
    <property type="match status" value="1"/>
</dbReference>
<dbReference type="PRINTS" id="PR00738">
    <property type="entry name" value="GLHYDRLASE20"/>
</dbReference>
<dbReference type="SUPFAM" id="SSF51445">
    <property type="entry name" value="(Trans)glycosidases"/>
    <property type="match status" value="1"/>
</dbReference>
<dbReference type="SUPFAM" id="SSF55545">
    <property type="entry name" value="beta-N-acetylhexosaminidase-like domain"/>
    <property type="match status" value="1"/>
</dbReference>
<accession>P07686</accession>
<proteinExistence type="evidence at protein level"/>
<keyword id="KW-0002">3D-structure</keyword>
<keyword id="KW-0968">Cytoplasmic vesicle</keyword>
<keyword id="KW-0903">Direct protein sequencing</keyword>
<keyword id="KW-0225">Disease variant</keyword>
<keyword id="KW-1015">Disulfide bond</keyword>
<keyword id="KW-0331">Gangliosidosis</keyword>
<keyword id="KW-0325">Glycoprotein</keyword>
<keyword id="KW-0326">Glycosidase</keyword>
<keyword id="KW-0378">Hydrolase</keyword>
<keyword id="KW-0443">Lipid metabolism</keyword>
<keyword id="KW-0458">Lysosome</keyword>
<keyword id="KW-0523">Neurodegeneration</keyword>
<keyword id="KW-1267">Proteomics identification</keyword>
<keyword id="KW-1185">Reference proteome</keyword>
<keyword id="KW-0732">Signal</keyword>
<keyword id="KW-0865">Zymogen</keyword>